<proteinExistence type="inferred from homology"/>
<protein>
    <recommendedName>
        <fullName evidence="1">NAD(P)H-quinone oxidoreductase subunit K, chloroplastic</fullName>
        <ecNumber evidence="1">7.1.1.-</ecNumber>
    </recommendedName>
    <alternativeName>
        <fullName evidence="1">NAD(P)H dehydrogenase subunit K</fullName>
    </alternativeName>
    <alternativeName>
        <fullName evidence="1">NADH-plastoquinone oxidoreductase subunit K</fullName>
    </alternativeName>
</protein>
<geneLocation type="chloroplast"/>
<dbReference type="EC" id="7.1.1.-" evidence="1"/>
<dbReference type="EMBL" id="AP009339">
    <property type="protein sequence ID" value="BAF64944.1"/>
    <property type="status" value="ALT_INIT"/>
    <property type="molecule type" value="Genomic_DNA"/>
</dbReference>
<dbReference type="RefSeq" id="YP_001312203.2">
    <property type="nucleotide sequence ID" value="NC_009618.1"/>
</dbReference>
<dbReference type="SMR" id="A6H5H8"/>
<dbReference type="GeneID" id="5309502"/>
<dbReference type="GO" id="GO:0009535">
    <property type="term" value="C:chloroplast thylakoid membrane"/>
    <property type="evidence" value="ECO:0007669"/>
    <property type="project" value="UniProtKB-SubCell"/>
</dbReference>
<dbReference type="GO" id="GO:0045271">
    <property type="term" value="C:respiratory chain complex I"/>
    <property type="evidence" value="ECO:0007669"/>
    <property type="project" value="TreeGrafter"/>
</dbReference>
<dbReference type="GO" id="GO:0051539">
    <property type="term" value="F:4 iron, 4 sulfur cluster binding"/>
    <property type="evidence" value="ECO:0007669"/>
    <property type="project" value="UniProtKB-KW"/>
</dbReference>
<dbReference type="GO" id="GO:0005506">
    <property type="term" value="F:iron ion binding"/>
    <property type="evidence" value="ECO:0007669"/>
    <property type="project" value="UniProtKB-UniRule"/>
</dbReference>
<dbReference type="GO" id="GO:0008137">
    <property type="term" value="F:NADH dehydrogenase (ubiquinone) activity"/>
    <property type="evidence" value="ECO:0007669"/>
    <property type="project" value="InterPro"/>
</dbReference>
<dbReference type="GO" id="GO:0048038">
    <property type="term" value="F:quinone binding"/>
    <property type="evidence" value="ECO:0007669"/>
    <property type="project" value="UniProtKB-KW"/>
</dbReference>
<dbReference type="GO" id="GO:0009060">
    <property type="term" value="P:aerobic respiration"/>
    <property type="evidence" value="ECO:0007669"/>
    <property type="project" value="TreeGrafter"/>
</dbReference>
<dbReference type="GO" id="GO:0015990">
    <property type="term" value="P:electron transport coupled proton transport"/>
    <property type="evidence" value="ECO:0007669"/>
    <property type="project" value="TreeGrafter"/>
</dbReference>
<dbReference type="GO" id="GO:0019684">
    <property type="term" value="P:photosynthesis, light reaction"/>
    <property type="evidence" value="ECO:0007669"/>
    <property type="project" value="UniProtKB-UniRule"/>
</dbReference>
<dbReference type="FunFam" id="3.40.50.12280:FF:000003">
    <property type="entry name" value="NAD(P)H-quinone oxidoreductase subunit K, chloroplastic"/>
    <property type="match status" value="1"/>
</dbReference>
<dbReference type="Gene3D" id="3.40.50.12280">
    <property type="match status" value="1"/>
</dbReference>
<dbReference type="HAMAP" id="MF_01356">
    <property type="entry name" value="NDH1_NuoB"/>
    <property type="match status" value="1"/>
</dbReference>
<dbReference type="InterPro" id="IPR006137">
    <property type="entry name" value="NADH_UbQ_OxRdtase-like_20kDa"/>
</dbReference>
<dbReference type="InterPro" id="IPR006138">
    <property type="entry name" value="NADH_UQ_OxRdtase_20Kd_su"/>
</dbReference>
<dbReference type="NCBIfam" id="TIGR01957">
    <property type="entry name" value="nuoB_fam"/>
    <property type="match status" value="1"/>
</dbReference>
<dbReference type="NCBIfam" id="NF005012">
    <property type="entry name" value="PRK06411.1"/>
    <property type="match status" value="1"/>
</dbReference>
<dbReference type="PANTHER" id="PTHR11995">
    <property type="entry name" value="NADH DEHYDROGENASE"/>
    <property type="match status" value="1"/>
</dbReference>
<dbReference type="PANTHER" id="PTHR11995:SF14">
    <property type="entry name" value="NADH DEHYDROGENASE [UBIQUINONE] IRON-SULFUR PROTEIN 7, MITOCHONDRIAL"/>
    <property type="match status" value="1"/>
</dbReference>
<dbReference type="Pfam" id="PF01058">
    <property type="entry name" value="Oxidored_q6"/>
    <property type="match status" value="1"/>
</dbReference>
<dbReference type="SUPFAM" id="SSF56770">
    <property type="entry name" value="HydA/Nqo6-like"/>
    <property type="match status" value="1"/>
</dbReference>
<dbReference type="PROSITE" id="PS01150">
    <property type="entry name" value="COMPLEX1_20K"/>
    <property type="match status" value="1"/>
</dbReference>
<comment type="function">
    <text evidence="1">NDH shuttles electrons from NAD(P)H:plastoquinone, via FMN and iron-sulfur (Fe-S) centers, to quinones in the photosynthetic chain and possibly in a chloroplast respiratory chain. The immediate electron acceptor for the enzyme in this species is believed to be plastoquinone. Couples the redox reaction to proton translocation, and thus conserves the redox energy in a proton gradient.</text>
</comment>
<comment type="catalytic activity">
    <reaction evidence="1">
        <text>a plastoquinone + NADH + (n+1) H(+)(in) = a plastoquinol + NAD(+) + n H(+)(out)</text>
        <dbReference type="Rhea" id="RHEA:42608"/>
        <dbReference type="Rhea" id="RHEA-COMP:9561"/>
        <dbReference type="Rhea" id="RHEA-COMP:9562"/>
        <dbReference type="ChEBI" id="CHEBI:15378"/>
        <dbReference type="ChEBI" id="CHEBI:17757"/>
        <dbReference type="ChEBI" id="CHEBI:57540"/>
        <dbReference type="ChEBI" id="CHEBI:57945"/>
        <dbReference type="ChEBI" id="CHEBI:62192"/>
    </reaction>
</comment>
<comment type="catalytic activity">
    <reaction evidence="1">
        <text>a plastoquinone + NADPH + (n+1) H(+)(in) = a plastoquinol + NADP(+) + n H(+)(out)</text>
        <dbReference type="Rhea" id="RHEA:42612"/>
        <dbReference type="Rhea" id="RHEA-COMP:9561"/>
        <dbReference type="Rhea" id="RHEA-COMP:9562"/>
        <dbReference type="ChEBI" id="CHEBI:15378"/>
        <dbReference type="ChEBI" id="CHEBI:17757"/>
        <dbReference type="ChEBI" id="CHEBI:57783"/>
        <dbReference type="ChEBI" id="CHEBI:58349"/>
        <dbReference type="ChEBI" id="CHEBI:62192"/>
    </reaction>
</comment>
<comment type="cofactor">
    <cofactor evidence="1">
        <name>[4Fe-4S] cluster</name>
        <dbReference type="ChEBI" id="CHEBI:49883"/>
    </cofactor>
    <text evidence="1">Binds 1 [4Fe-4S] cluster.</text>
</comment>
<comment type="subunit">
    <text evidence="1">NDH is composed of at least 16 different subunits, 5 of which are encoded in the nucleus.</text>
</comment>
<comment type="subcellular location">
    <subcellularLocation>
        <location evidence="1">Plastid</location>
        <location evidence="1">Chloroplast thylakoid membrane</location>
        <topology evidence="1">Peripheral membrane protein</topology>
        <orientation evidence="1">Stromal side</orientation>
    </subcellularLocation>
</comment>
<comment type="similarity">
    <text evidence="1">Belongs to the complex I 20 kDa subunit family.</text>
</comment>
<comment type="sequence caution" evidence="2">
    <conflict type="erroneous initiation">
        <sequence resource="EMBL-CDS" id="BAF64944"/>
    </conflict>
</comment>
<organism>
    <name type="scientific">Cycas taitungensis</name>
    <name type="common">Prince sago</name>
    <name type="synonym">Cycas taiwaniana</name>
    <dbReference type="NCBI Taxonomy" id="54799"/>
    <lineage>
        <taxon>Eukaryota</taxon>
        <taxon>Viridiplantae</taxon>
        <taxon>Streptophyta</taxon>
        <taxon>Embryophyta</taxon>
        <taxon>Tracheophyta</taxon>
        <taxon>Spermatophyta</taxon>
        <taxon>Cycadidae</taxon>
        <taxon>Cycadales</taxon>
        <taxon>Cycadaceae</taxon>
        <taxon>Cycas</taxon>
    </lineage>
</organism>
<keyword id="KW-0004">4Fe-4S</keyword>
<keyword id="KW-0150">Chloroplast</keyword>
<keyword id="KW-0408">Iron</keyword>
<keyword id="KW-0411">Iron-sulfur</keyword>
<keyword id="KW-0472">Membrane</keyword>
<keyword id="KW-0479">Metal-binding</keyword>
<keyword id="KW-0520">NAD</keyword>
<keyword id="KW-0521">NADP</keyword>
<keyword id="KW-0934">Plastid</keyword>
<keyword id="KW-0618">Plastoquinone</keyword>
<keyword id="KW-0874">Quinone</keyword>
<keyword id="KW-0793">Thylakoid</keyword>
<keyword id="KW-1278">Translocase</keyword>
<keyword id="KW-0813">Transport</keyword>
<gene>
    <name evidence="1" type="primary">ndhK</name>
</gene>
<sequence length="261" mass="29498">MGSTESPLLGQTTPNSVISTTLNDLSNWARLSSLWPLLYGTSCCFIEFASLIGSRFDFDRYGLVPRSSPRQADLIITAGTVTMKMAPSLVRLYEQMPGPKYVIAMGACTITGGMFSTDSYSTVRGVDKLIPVDVYLPGCPPKPEAIIDAIIKLRKKVAREIYEDRTKLQQGKRYFTQNHKFRVGSSLYTGNYDQKLLHKSPEPQSESTSEILSKTFESTSEIPSDFVKYENSVSFQESRNEEYFVKSNEQEINFQKFHWKC</sequence>
<accession>A6H5H8</accession>
<name>NDHK_CYCTA</name>
<evidence type="ECO:0000255" key="1">
    <source>
        <dbReference type="HAMAP-Rule" id="MF_01356"/>
    </source>
</evidence>
<evidence type="ECO:0000305" key="2"/>
<feature type="chain" id="PRO_0000358538" description="NAD(P)H-quinone oxidoreductase subunit K, chloroplastic">
    <location>
        <begin position="1"/>
        <end position="261"/>
    </location>
</feature>
<feature type="binding site" evidence="1">
    <location>
        <position position="43"/>
    </location>
    <ligand>
        <name>[4Fe-4S] cluster</name>
        <dbReference type="ChEBI" id="CHEBI:49883"/>
    </ligand>
</feature>
<feature type="binding site" evidence="1">
    <location>
        <position position="44"/>
    </location>
    <ligand>
        <name>[4Fe-4S] cluster</name>
        <dbReference type="ChEBI" id="CHEBI:49883"/>
    </ligand>
</feature>
<feature type="binding site" evidence="1">
    <location>
        <position position="108"/>
    </location>
    <ligand>
        <name>[4Fe-4S] cluster</name>
        <dbReference type="ChEBI" id="CHEBI:49883"/>
    </ligand>
</feature>
<feature type="binding site" evidence="1">
    <location>
        <position position="139"/>
    </location>
    <ligand>
        <name>[4Fe-4S] cluster</name>
        <dbReference type="ChEBI" id="CHEBI:49883"/>
    </ligand>
</feature>
<reference key="1">
    <citation type="journal article" date="2007" name="Mol. Biol. Evol.">
        <title>Chloroplast genome (cpDNA) of Cycas taitungensis and 56 cp protein-coding genes of Gnetum parvifolium: insights into cpDNA evolution and phylogeny of extant seed plants.</title>
        <authorList>
            <person name="Wu C.-S."/>
            <person name="Wang Y.-N."/>
            <person name="Liu S.-M."/>
            <person name="Chaw S.-M."/>
        </authorList>
    </citation>
    <scope>NUCLEOTIDE SEQUENCE [LARGE SCALE GENOMIC DNA]</scope>
</reference>